<organism>
    <name type="scientific">Aedes pseudoscutellaris reovirus (isolate France)</name>
    <name type="common">ApRV</name>
    <dbReference type="NCBI Taxonomy" id="648170"/>
    <lineage>
        <taxon>Viruses</taxon>
        <taxon>Riboviria</taxon>
        <taxon>Orthornavirae</taxon>
        <taxon>Duplornaviricota</taxon>
        <taxon>Resentoviricetes</taxon>
        <taxon>Reovirales</taxon>
        <taxon>Spinareoviridae</taxon>
        <taxon>Dinovernavirus</taxon>
        <taxon>Aedes pseudoscutellaris reovirus</taxon>
    </lineage>
</organism>
<feature type="chain" id="PRO_0000403279" description="Outer capsid protein VP5">
    <location>
        <begin position="1"/>
        <end position="1056"/>
    </location>
</feature>
<reference key="1">
    <citation type="journal article" date="2005" name="Virology">
        <title>Expansion of family Reoviridae to include nine-segmented dsRNA viruses: isolation and characterization of a new virus designated Aedes pseudoscutellaris reovirus assigned to a proposed genus (Dinovernavirus).</title>
        <authorList>
            <person name="Attoui H."/>
            <person name="Mohd Jaafar F."/>
            <person name="Belhouchet M."/>
            <person name="Biagini P."/>
            <person name="Cantaloube J.F."/>
            <person name="de Micco P."/>
            <person name="de Lamballerie X."/>
        </authorList>
    </citation>
    <scope>NUCLEOTIDE SEQUENCE [GENOMIC RNA]</scope>
</reference>
<gene>
    <name type="primary">S5</name>
</gene>
<evidence type="ECO:0000250" key="1"/>
<evidence type="ECO:0000305" key="2"/>
<sequence length="1056" mass="121238">MIDLRLEEDILTATLPEFLTTRPKYRYAYTNTKQQDLRLLGPMRHVRLTHLYKHTKLWNLQYIERELTNIEIDDALDEFMQTFSLPYTIEQGTYKYNMLLGMHAHNIGYQDDVSELIANNPQLLNYLNDNPLASIFELIDIDLQIYQYGQNIFNNEVEHMILFLKDNTYHGVIQALQKHPFSATHVTWHLHKHIFVFHSREKLLNKLLATGLEDSQLYQRQKTYSTKRGDRPTERMITYIEDDHIRRIQAVLPLLLDNIFDVKLHRDSSMTWLKSYADTIYDSAKNSDSTVTPEIRKLYLRMYNQYMRVFLPIEQYMLYDTTCWPFSEKITLKINVRLISSRENQPVSWKTPIDTENLISIVQPDNPINKLNFTAVPSTMIRLNDNIMMYRSVKDMFAAIEYIPDSDENIPTIEMKEQALSRYISPDSEAQNFFNNQPPYLNSIINVNKQVFEAVRRGNIQVSTGSAEHLCLCMYVKSGLIVGRTVLIDDKVILRRNFNASTAKMITCYVKAVTQLYGEGSLIYPGLRIVFFGVETEPAMDVLKLFYGDKALYIQGFGDRGIGRDRFRTKIEDALTLRIGCDILISDIDQADYQDPSEEKFDDITEFVCYLTELVISNATIGLVKISMPTYYLLNKISQNINNKFSKVNINIVKLSTQKPYTYEAYLLLSHGSTLTTKGYAKNPVCDVYLEQISLQPQEIKIISTISNEINYDKPTLYRLVVDKNDITDVSIAMHILSIHCSTIITRSVMVKNDNTGAFVTMSGMKDMKRVAIMNRMTDGTNENAYMYEDNGKLYLQKVPYLEDLVNAFPNGFGSTHQNDYDSSTSVINVNALVRQVVYRVISKSIPVALLESLSRIRIVGGRDLGEMNAVYKLYKTPVEVYDTVGITREYPHVQISYRAQRYQFTESIPNHTLLLANYVIMNDIDRAPISSAEQINTIKKIISKIGVGSIAYVQVYTDVVARHINVMTKNDSFLISANADKTVFKVQVSGYKAVEMCNYEQLLQLVSDNTGVHIIKLTYQDVLESCVLSSGILGDTGSWLLDLVLASTYIIEIRG</sequence>
<comment type="function">
    <text evidence="1">Outer capsid protein involved in mRNA capping. Catalyzes the last 3 enzymatic activities for formation of the 5' cap structure on the viral plus-strand transcripts, namely the RNA guanylyltransferase, RNA-7N- and RNA-2'O-methyltransferase activities (By similarity).</text>
</comment>
<comment type="catalytic activity">
    <reaction>
        <text>a 5'-end diphospho-ribonucleoside in mRNA + GTP + H(+) = a 5'-end (5'-triphosphoguanosine)-ribonucleoside in mRNA + diphosphate</text>
        <dbReference type="Rhea" id="RHEA:67012"/>
        <dbReference type="Rhea" id="RHEA-COMP:17165"/>
        <dbReference type="Rhea" id="RHEA-COMP:17166"/>
        <dbReference type="ChEBI" id="CHEBI:15378"/>
        <dbReference type="ChEBI" id="CHEBI:33019"/>
        <dbReference type="ChEBI" id="CHEBI:37565"/>
        <dbReference type="ChEBI" id="CHEBI:167616"/>
        <dbReference type="ChEBI" id="CHEBI:167617"/>
        <dbReference type="EC" id="2.7.7.50"/>
    </reaction>
</comment>
<comment type="catalytic activity">
    <reaction>
        <text>a 5'-end (5'-triphosphoguanosine)-ribonucleoside in mRNA + S-adenosyl-L-methionine = a 5'-end (N(7)-methyl 5'-triphosphoguanosine)-ribonucleoside in mRNA + S-adenosyl-L-homocysteine</text>
        <dbReference type="Rhea" id="RHEA:67008"/>
        <dbReference type="Rhea" id="RHEA-COMP:17166"/>
        <dbReference type="Rhea" id="RHEA-COMP:17167"/>
        <dbReference type="ChEBI" id="CHEBI:57856"/>
        <dbReference type="ChEBI" id="CHEBI:59789"/>
        <dbReference type="ChEBI" id="CHEBI:156461"/>
        <dbReference type="ChEBI" id="CHEBI:167617"/>
        <dbReference type="EC" id="2.1.1.56"/>
    </reaction>
</comment>
<comment type="subcellular location">
    <subcellularLocation>
        <location evidence="2">Virion</location>
    </subcellularLocation>
</comment>
<comment type="similarity">
    <text evidence="2">Belongs to the orthoreovirus lambda-2 protein family.</text>
</comment>
<dbReference type="EC" id="2.7.7.50"/>
<dbReference type="EC" id="2.1.1.56"/>
<dbReference type="EMBL" id="DQ087280">
    <property type="protein sequence ID" value="AAZ94072.1"/>
    <property type="molecule type" value="Genomic_RNA"/>
</dbReference>
<dbReference type="RefSeq" id="YP_443939.1">
    <property type="nucleotide sequence ID" value="NC_007670.1"/>
</dbReference>
<dbReference type="SMR" id="Q2Y0E6"/>
<dbReference type="KEGG" id="vg:5076692"/>
<dbReference type="Proteomes" id="UP000001676">
    <property type="component" value="Genome"/>
</dbReference>
<dbReference type="GO" id="GO:0039624">
    <property type="term" value="C:viral outer capsid"/>
    <property type="evidence" value="ECO:0007669"/>
    <property type="project" value="UniProtKB-KW"/>
</dbReference>
<dbReference type="GO" id="GO:0005524">
    <property type="term" value="F:ATP binding"/>
    <property type="evidence" value="ECO:0007669"/>
    <property type="project" value="UniProtKB-KW"/>
</dbReference>
<dbReference type="GO" id="GO:0005525">
    <property type="term" value="F:GTP binding"/>
    <property type="evidence" value="ECO:0007669"/>
    <property type="project" value="UniProtKB-KW"/>
</dbReference>
<dbReference type="GO" id="GO:0004482">
    <property type="term" value="F:mRNA 5'-cap (guanine-N7-)-methyltransferase activity"/>
    <property type="evidence" value="ECO:0007669"/>
    <property type="project" value="UniProtKB-EC"/>
</dbReference>
<dbReference type="GO" id="GO:0004484">
    <property type="term" value="F:mRNA guanylyltransferase activity"/>
    <property type="evidence" value="ECO:0007669"/>
    <property type="project" value="UniProtKB-EC"/>
</dbReference>
<dbReference type="InterPro" id="IPR048605">
    <property type="entry name" value="Reov_VP3_bridge"/>
</dbReference>
<dbReference type="InterPro" id="IPR048608">
    <property type="entry name" value="Reov_VP3_GTase"/>
</dbReference>
<dbReference type="InterPro" id="IPR048607">
    <property type="entry name" value="Reov_VP3_MTase1"/>
</dbReference>
<dbReference type="InterPro" id="IPR048606">
    <property type="entry name" value="Reov_VP3_MTase2"/>
</dbReference>
<dbReference type="Pfam" id="PF20790">
    <property type="entry name" value="Reov_VP3_GTase"/>
    <property type="match status" value="1"/>
</dbReference>
<dbReference type="Pfam" id="PF20831">
    <property type="entry name" value="Reov_VP3_MTase1"/>
    <property type="match status" value="1"/>
</dbReference>
<dbReference type="Pfam" id="PF20832">
    <property type="entry name" value="Reov_VP3_MTase2"/>
    <property type="match status" value="1"/>
</dbReference>
<dbReference type="Pfam" id="PF20830">
    <property type="entry name" value="Reovirus_bridge"/>
    <property type="match status" value="1"/>
</dbReference>
<protein>
    <recommendedName>
        <fullName>Outer capsid protein VP5</fullName>
    </recommendedName>
    <domain>
        <recommendedName>
            <fullName>mRNA guanylyltransferase</fullName>
            <ecNumber>2.7.7.50</ecNumber>
        </recommendedName>
    </domain>
    <domain>
        <recommendedName>
            <fullName>mRNA (guanine-N(7))-methyltransferase</fullName>
            <ecNumber>2.1.1.56</ecNumber>
        </recommendedName>
    </domain>
</protein>
<organismHost>
    <name type="scientific">Aedes pseudoscutellaris</name>
    <name type="common">Mosquito</name>
    <name type="synonym">Stegomyia pseudoscutellaris</name>
    <dbReference type="NCBI Taxonomy" id="316597"/>
</organismHost>
<keyword id="KW-0067">ATP-binding</keyword>
<keyword id="KW-0167">Capsid protein</keyword>
<keyword id="KW-0342">GTP-binding</keyword>
<keyword id="KW-0489">Methyltransferase</keyword>
<keyword id="KW-0506">mRNA capping</keyword>
<keyword id="KW-0507">mRNA processing</keyword>
<keyword id="KW-0511">Multifunctional enzyme</keyword>
<keyword id="KW-0547">Nucleotide-binding</keyword>
<keyword id="KW-0548">Nucleotidyltransferase</keyword>
<keyword id="KW-1152">Outer capsid protein</keyword>
<keyword id="KW-1185">Reference proteome</keyword>
<keyword id="KW-0949">S-adenosyl-L-methionine</keyword>
<keyword id="KW-0808">Transferase</keyword>
<keyword id="KW-0946">Virion</keyword>
<name>VP5_APRVF</name>
<accession>Q2Y0E6</accession>
<proteinExistence type="inferred from homology"/>